<gene>
    <name type="primary">HECTD2</name>
</gene>
<reference key="1">
    <citation type="submission" date="2004-11" db="EMBL/GenBank/DDBJ databases">
        <authorList>
            <consortium name="The German cDNA consortium"/>
        </authorList>
    </citation>
    <scope>NUCLEOTIDE SEQUENCE [LARGE SCALE MRNA]</scope>
    <source>
        <tissue>Brain cortex</tissue>
    </source>
</reference>
<dbReference type="EC" id="2.3.2.26" evidence="1"/>
<dbReference type="EMBL" id="CR858038">
    <property type="protein sequence ID" value="CAH90279.1"/>
    <property type="molecule type" value="mRNA"/>
</dbReference>
<dbReference type="RefSeq" id="NP_001125126.1">
    <property type="nucleotide sequence ID" value="NM_001131654.1"/>
</dbReference>
<dbReference type="SMR" id="Q5RD78"/>
<dbReference type="FunCoup" id="Q5RD78">
    <property type="interactions" value="771"/>
</dbReference>
<dbReference type="STRING" id="9601.ENSPPYP00000002871"/>
<dbReference type="GeneID" id="100172010"/>
<dbReference type="KEGG" id="pon:100172010"/>
<dbReference type="CTD" id="143279"/>
<dbReference type="eggNOG" id="KOG0941">
    <property type="taxonomic scope" value="Eukaryota"/>
</dbReference>
<dbReference type="InParanoid" id="Q5RD78"/>
<dbReference type="OrthoDB" id="5981550at2759"/>
<dbReference type="UniPathway" id="UPA00143"/>
<dbReference type="Proteomes" id="UP000001595">
    <property type="component" value="Unplaced"/>
</dbReference>
<dbReference type="GO" id="GO:0061630">
    <property type="term" value="F:ubiquitin protein ligase activity"/>
    <property type="evidence" value="ECO:0007669"/>
    <property type="project" value="InterPro"/>
</dbReference>
<dbReference type="GO" id="GO:0000209">
    <property type="term" value="P:protein polyubiquitination"/>
    <property type="evidence" value="ECO:0007669"/>
    <property type="project" value="InterPro"/>
</dbReference>
<dbReference type="CDD" id="cd00078">
    <property type="entry name" value="HECTc"/>
    <property type="match status" value="1"/>
</dbReference>
<dbReference type="FunFam" id="3.30.2410.10:FF:000009">
    <property type="entry name" value="Probable E3 ubiquitin-protein ligase HECTD2"/>
    <property type="match status" value="1"/>
</dbReference>
<dbReference type="FunFam" id="3.90.1750.10:FF:000023">
    <property type="entry name" value="probable E3 ubiquitin-protein ligase HECTD2 isoform X2"/>
    <property type="match status" value="1"/>
</dbReference>
<dbReference type="FunFam" id="3.30.2160.10:FF:000004">
    <property type="entry name" value="probable E3 ubiquitin-protein ligase HERC4 isoform X1"/>
    <property type="match status" value="1"/>
</dbReference>
<dbReference type="Gene3D" id="3.30.2160.10">
    <property type="entry name" value="Hect, E3 ligase catalytic domain"/>
    <property type="match status" value="1"/>
</dbReference>
<dbReference type="Gene3D" id="3.30.2410.10">
    <property type="entry name" value="Hect, E3 ligase catalytic domain"/>
    <property type="match status" value="1"/>
</dbReference>
<dbReference type="Gene3D" id="3.90.1750.10">
    <property type="entry name" value="Hect, E3 ligase catalytic domains"/>
    <property type="match status" value="1"/>
</dbReference>
<dbReference type="InterPro" id="IPR044611">
    <property type="entry name" value="E3A/B/C-like"/>
</dbReference>
<dbReference type="InterPro" id="IPR000569">
    <property type="entry name" value="HECT_dom"/>
</dbReference>
<dbReference type="InterPro" id="IPR035983">
    <property type="entry name" value="Hect_E3_ubiquitin_ligase"/>
</dbReference>
<dbReference type="PANTHER" id="PTHR45700:SF9">
    <property type="entry name" value="HECT-TYPE E3 UBIQUITIN TRANSFERASE"/>
    <property type="match status" value="1"/>
</dbReference>
<dbReference type="PANTHER" id="PTHR45700">
    <property type="entry name" value="UBIQUITIN-PROTEIN LIGASE E3C"/>
    <property type="match status" value="1"/>
</dbReference>
<dbReference type="Pfam" id="PF00632">
    <property type="entry name" value="HECT"/>
    <property type="match status" value="1"/>
</dbReference>
<dbReference type="SMART" id="SM00119">
    <property type="entry name" value="HECTc"/>
    <property type="match status" value="1"/>
</dbReference>
<dbReference type="SUPFAM" id="SSF56204">
    <property type="entry name" value="Hect, E3 ligase catalytic domain"/>
    <property type="match status" value="1"/>
</dbReference>
<dbReference type="PROSITE" id="PS50237">
    <property type="entry name" value="HECT"/>
    <property type="match status" value="1"/>
</dbReference>
<accession>Q5RD78</accession>
<name>HECD2_PONAB</name>
<comment type="function">
    <text evidence="1">E3 ubiquitin-protein ligase which accepts ubiquitin from an E2 ubiquitin-conjugating enzyme in the form of a thioester and then directly transfers the ubiquitin to targeted substrates.</text>
</comment>
<comment type="catalytic activity">
    <reaction evidence="1">
        <text>S-ubiquitinyl-[E2 ubiquitin-conjugating enzyme]-L-cysteine + [acceptor protein]-L-lysine = [E2 ubiquitin-conjugating enzyme]-L-cysteine + N(6)-ubiquitinyl-[acceptor protein]-L-lysine.</text>
        <dbReference type="EC" id="2.3.2.26"/>
    </reaction>
</comment>
<comment type="pathway">
    <text evidence="1">Protein modification; protein ubiquitination.</text>
</comment>
<protein>
    <recommendedName>
        <fullName>Probable E3 ubiquitin-protein ligase HECTD2</fullName>
        <ecNumber evidence="1">2.3.2.26</ecNumber>
    </recommendedName>
    <alternativeName>
        <fullName>HECT domain-containing protein 2</fullName>
    </alternativeName>
    <alternativeName>
        <fullName>HECT-type E3 ubiquitin transferase HECTD2</fullName>
    </alternativeName>
</protein>
<sequence length="776" mass="88142">MSEAVRVPSPATPLVVAAAAPEERKGKESEREKLPPIVSAGAGATAGLDRGAKGQISTFSSFISAVSPKKEAAENRSSPAHLVFPNIKNVRDQPPICLDVRQKQRTSMDASSSEMKAPVLPEPIHPIQPKTVKDFQEDVEKVKSSGDWKAVHDFYLTTFDSFPELNAAFKKDATASFNTIEDSGINAKFVNAVYDTLLNTPQDIQKTVLKGIINSLLREWKGPRTKDDLRAYFVLLQNPQFNNTSTYVIYAHLLRQIATLVEADHHFLVHWFKRLSQKRFKQLVERLLQFISLRLFPAKPEEFPPVTKCSWWIPSAAKVLALLNTANNLVHPPLIPYTDFYNSTLDHIDLMEEYHTWQNFGNSHRFSFCQYPFVISVAAKKIIIQRDSEQQMINIARQSLVDKVSRRQRPDMNMLFLNMKVRRTHLVSDSLDELTRKRADLKKKLKVTFVGEAGLDMGGLTKEWFLLLIRQIFHPDYGMFTYHKDSHCHWFSSFKCDNYSEFRLVGILMGLAVYNSITLDIRFPPCCYKKLLSPPIIPSDQNIPVGICSVTVDDLCQIMPELAHGLSELLSHEGNVEEDFYSTFQVFQEEFGIIKSYNLKPGGDKISVTNQNRKEYVQLYTDFLLNKSIYKQFAAFYYGFHSVCASNALMLLRPEEVEILVCGSPDLDMHALQRSTQYDGYAKTDLTIKYFWDVVLGFPLDLQKKLLHFTTGSDRVPVGGMADLNFKISKNETSTNCLPVAHTCFNQLCLPPYKSKKDLKQKLIIGISNSEGFGLE</sequence>
<keyword id="KW-0597">Phosphoprotein</keyword>
<keyword id="KW-1185">Reference proteome</keyword>
<keyword id="KW-0808">Transferase</keyword>
<keyword id="KW-0833">Ubl conjugation pathway</keyword>
<proteinExistence type="evidence at transcript level"/>
<evidence type="ECO:0000250" key="1">
    <source>
        <dbReference type="UniProtKB" id="Q5U5R9"/>
    </source>
</evidence>
<evidence type="ECO:0000250" key="2">
    <source>
        <dbReference type="UniProtKB" id="Q8CDU6"/>
    </source>
</evidence>
<evidence type="ECO:0000255" key="3">
    <source>
        <dbReference type="PROSITE-ProRule" id="PRU00104"/>
    </source>
</evidence>
<evidence type="ECO:0000256" key="4">
    <source>
        <dbReference type="SAM" id="MobiDB-lite"/>
    </source>
</evidence>
<organism>
    <name type="scientific">Pongo abelii</name>
    <name type="common">Sumatran orangutan</name>
    <name type="synonym">Pongo pygmaeus abelii</name>
    <dbReference type="NCBI Taxonomy" id="9601"/>
    <lineage>
        <taxon>Eukaryota</taxon>
        <taxon>Metazoa</taxon>
        <taxon>Chordata</taxon>
        <taxon>Craniata</taxon>
        <taxon>Vertebrata</taxon>
        <taxon>Euteleostomi</taxon>
        <taxon>Mammalia</taxon>
        <taxon>Eutheria</taxon>
        <taxon>Euarchontoglires</taxon>
        <taxon>Primates</taxon>
        <taxon>Haplorrhini</taxon>
        <taxon>Catarrhini</taxon>
        <taxon>Hominidae</taxon>
        <taxon>Pongo</taxon>
    </lineage>
</organism>
<feature type="chain" id="PRO_0000240853" description="Probable E3 ubiquitin-protein ligase HECTD2">
    <location>
        <begin position="1"/>
        <end position="776"/>
    </location>
</feature>
<feature type="domain" description="HECT" evidence="3">
    <location>
        <begin position="437"/>
        <end position="776"/>
    </location>
</feature>
<feature type="region of interest" description="Disordered" evidence="4">
    <location>
        <begin position="1"/>
        <end position="46"/>
    </location>
</feature>
<feature type="compositionally biased region" description="Low complexity" evidence="4">
    <location>
        <begin position="7"/>
        <end position="20"/>
    </location>
</feature>
<feature type="compositionally biased region" description="Basic and acidic residues" evidence="4">
    <location>
        <begin position="21"/>
        <end position="34"/>
    </location>
</feature>
<feature type="active site" description="Glycyl thioester intermediate" evidence="3">
    <location>
        <position position="744"/>
    </location>
</feature>
<feature type="modified residue" description="Phosphoserine" evidence="2">
    <location>
        <position position="9"/>
    </location>
</feature>